<comment type="function">
    <text evidence="4">Has an important function as a repair enzyme for proteins that have been inactivated by oxidation. Catalyzes the reversible oxidation-reduction of methionine sulfoxide in proteins to methionine.</text>
</comment>
<comment type="catalytic activity">
    <reaction evidence="4">
        <text>L-methionyl-[protein] + [thioredoxin]-disulfide + H2O = L-methionyl-(S)-S-oxide-[protein] + [thioredoxin]-dithiol</text>
        <dbReference type="Rhea" id="RHEA:14217"/>
        <dbReference type="Rhea" id="RHEA-COMP:10698"/>
        <dbReference type="Rhea" id="RHEA-COMP:10700"/>
        <dbReference type="Rhea" id="RHEA-COMP:12313"/>
        <dbReference type="Rhea" id="RHEA-COMP:12315"/>
        <dbReference type="ChEBI" id="CHEBI:15377"/>
        <dbReference type="ChEBI" id="CHEBI:16044"/>
        <dbReference type="ChEBI" id="CHEBI:29950"/>
        <dbReference type="ChEBI" id="CHEBI:44120"/>
        <dbReference type="ChEBI" id="CHEBI:50058"/>
        <dbReference type="EC" id="1.8.4.11"/>
    </reaction>
</comment>
<comment type="catalytic activity">
    <reaction evidence="4">
        <text>[thioredoxin]-disulfide + L-methionine + H2O = L-methionine (S)-S-oxide + [thioredoxin]-dithiol</text>
        <dbReference type="Rhea" id="RHEA:19993"/>
        <dbReference type="Rhea" id="RHEA-COMP:10698"/>
        <dbReference type="Rhea" id="RHEA-COMP:10700"/>
        <dbReference type="ChEBI" id="CHEBI:15377"/>
        <dbReference type="ChEBI" id="CHEBI:29950"/>
        <dbReference type="ChEBI" id="CHEBI:50058"/>
        <dbReference type="ChEBI" id="CHEBI:57844"/>
        <dbReference type="ChEBI" id="CHEBI:58772"/>
        <dbReference type="EC" id="1.8.4.11"/>
    </reaction>
</comment>
<comment type="subcellular location">
    <molecule>Isoform 1</molecule>
    <subcellularLocation>
        <location>Mitochondrion</location>
    </subcellularLocation>
</comment>
<comment type="subcellular location">
    <molecule>Isoform 2</molecule>
    <subcellularLocation>
        <location>Cytoplasm</location>
    </subcellularLocation>
    <subcellularLocation>
        <location>Nucleus</location>
    </subcellularLocation>
    <subcellularLocation>
        <location>Membrane</location>
        <topology>Lipid-anchor</topology>
    </subcellularLocation>
</comment>
<comment type="alternative products">
    <event type="alternative splicing"/>
    <event type="alternative initiation"/>
    <isoform>
        <id>Q9D6Y7-1</id>
        <name>1</name>
        <sequence type="displayed"/>
    </isoform>
    <isoform>
        <id>Q9D6Y7-2</id>
        <name>2</name>
        <sequence type="described" ref="VSP_042133"/>
    </isoform>
    <isoform>
        <id>Q9D6Y7-3</id>
        <name>3</name>
        <sequence type="described" ref="VSP_041409"/>
    </isoform>
    <isoform>
        <id>Q9D6Y7-4</id>
        <name>4</name>
        <sequence type="described" ref="VSP_041408"/>
    </isoform>
    <text evidence="3">Only about 25% of mRNAs are initiated at the mitochondrial isoform 1 codon. According to PubMed:15924425, differential subcellular targeting is not due alternative initiation.</text>
</comment>
<comment type="miscellaneous">
    <molecule>Isoform 1</molecule>
    <text>Mitochondrial.</text>
</comment>
<comment type="miscellaneous">
    <molecule>Isoform 2</molecule>
    <text evidence="7">Cytoplasmic. Produced by alternative initiation.</text>
</comment>
<comment type="similarity">
    <text evidence="7">Belongs to the MsrA Met sulfoxide reductase family.</text>
</comment>
<gene>
    <name type="primary">Msra</name>
</gene>
<proteinExistence type="evidence at protein level"/>
<feature type="transit peptide" description="Mitochondrion" evidence="1">
    <location>
        <begin position="1"/>
        <end position="20"/>
    </location>
</feature>
<feature type="chain" id="PRO_0000138627" description="Mitochondrial peptide methionine sulfoxide reductase">
    <location>
        <begin position="21"/>
        <end position="233"/>
    </location>
</feature>
<feature type="active site" description="Cysteine sulfenic acid (-SOH) intermediate" evidence="2">
    <location>
        <position position="72"/>
    </location>
</feature>
<feature type="modified residue" description="N6-acetyllysine; alternate" evidence="8">
    <location>
        <position position="104"/>
    </location>
</feature>
<feature type="modified residue" description="N6-succinyllysine; alternate" evidence="9">
    <location>
        <position position="104"/>
    </location>
</feature>
<feature type="modified residue" description="N6-acetyllysine; alternate" evidence="8">
    <location>
        <position position="183"/>
    </location>
</feature>
<feature type="modified residue" description="N6-succinyllysine; alternate" evidence="9">
    <location>
        <position position="183"/>
    </location>
</feature>
<feature type="disulfide bond" description="Redox-active; alternate" evidence="2">
    <location>
        <begin position="72"/>
        <end position="218"/>
    </location>
</feature>
<feature type="disulfide bond" description="Redox-active; alternate" evidence="2">
    <location>
        <begin position="218"/>
        <end position="227"/>
    </location>
</feature>
<feature type="splice variant" id="VSP_041408" description="In isoform 4." evidence="6">
    <original>MLSASRRALQLLSSANPVRRMGDSASKVISAEEALPGRTEPIPVT</original>
    <variation>MSK</variation>
    <location>
        <begin position="1"/>
        <end position="45"/>
    </location>
</feature>
<feature type="splice variant" id="VSP_042133" description="In isoform 2." evidence="7">
    <location>
        <begin position="1"/>
        <end position="20"/>
    </location>
</feature>
<feature type="splice variant" id="VSP_041409" description="In isoform 3." evidence="5">
    <location>
        <begin position="69"/>
        <end position="108"/>
    </location>
</feature>
<feature type="sequence conflict" description="In Ref. 1; BAB22035." evidence="7" ref="1">
    <original>R</original>
    <variation>G</variation>
    <location>
        <position position="20"/>
    </location>
</feature>
<feature type="sequence conflict" description="In Ref. 1; AK018338." evidence="7" ref="1">
    <original>R</original>
    <variation>P</variation>
    <location>
        <position position="156"/>
    </location>
</feature>
<feature type="sequence conflict" description="In Ref. 1; BAB22035." evidence="7" ref="1">
    <original>G</original>
    <variation>V</variation>
    <location>
        <position position="187"/>
    </location>
</feature>
<feature type="helix" evidence="10">
    <location>
        <begin position="24"/>
        <end position="26"/>
    </location>
</feature>
<feature type="helix" evidence="11">
    <location>
        <begin position="31"/>
        <end position="33"/>
    </location>
</feature>
<feature type="turn" evidence="11">
    <location>
        <begin position="49"/>
        <end position="51"/>
    </location>
</feature>
<feature type="strand" evidence="11">
    <location>
        <begin position="56"/>
        <end position="58"/>
    </location>
</feature>
<feature type="strand" evidence="11">
    <location>
        <begin position="64"/>
        <end position="72"/>
    </location>
</feature>
<feature type="helix" evidence="11">
    <location>
        <begin position="73"/>
        <end position="81"/>
    </location>
</feature>
<feature type="strand" evidence="11">
    <location>
        <begin position="86"/>
        <end position="97"/>
    </location>
</feature>
<feature type="helix" evidence="11">
    <location>
        <begin position="103"/>
        <end position="107"/>
    </location>
</feature>
<feature type="strand" evidence="11">
    <location>
        <begin position="114"/>
        <end position="121"/>
    </location>
</feature>
<feature type="turn" evidence="11">
    <location>
        <begin position="123"/>
        <end position="125"/>
    </location>
</feature>
<feature type="helix" evidence="11">
    <location>
        <begin position="128"/>
        <end position="137"/>
    </location>
</feature>
<feature type="strand" evidence="11">
    <location>
        <begin position="144"/>
        <end position="147"/>
    </location>
</feature>
<feature type="strand" evidence="11">
    <location>
        <begin position="150"/>
        <end position="152"/>
    </location>
</feature>
<feature type="helix" evidence="11">
    <location>
        <begin position="153"/>
        <end position="155"/>
    </location>
</feature>
<feature type="strand" evidence="11">
    <location>
        <begin position="157"/>
        <end position="159"/>
    </location>
</feature>
<feature type="helix" evidence="11">
    <location>
        <begin position="164"/>
        <end position="183"/>
    </location>
</feature>
<feature type="helix" evidence="11">
    <location>
        <begin position="204"/>
        <end position="206"/>
    </location>
</feature>
<feature type="helix" evidence="11">
    <location>
        <begin position="209"/>
        <end position="212"/>
    </location>
</feature>
<feature type="turn" evidence="10">
    <location>
        <begin position="228"/>
        <end position="230"/>
    </location>
</feature>
<feature type="lipid moiety-binding region" description="N-myristoyl glycine" evidence="3">
    <location sequence="Q9D6Y7-2">
        <position position="2"/>
    </location>
</feature>
<sequence>MLSASRRALQLLSSANPVRRMGDSASKVISAEEALPGRTEPIPVTAKHHVSGNRTVEPFPEGTQMAVFGMGCFWGAERKFWVLKGVYSTQVGFAGGHTRNPTYKEVCSEKTGHAEVVRVVYRPEHISFEELLKVFWENHDPTQGMRQGNDFGTQYRSAVYPTSAVQMEAALRSKEEYQKVLSKHNFGPITTDIREGQVFYYAEDYHQQYLSKNPDGYCGLGGTGVSCPMAIKK</sequence>
<reference key="1">
    <citation type="journal article" date="2005" name="Science">
        <title>The transcriptional landscape of the mammalian genome.</title>
        <authorList>
            <person name="Carninci P."/>
            <person name="Kasukawa T."/>
            <person name="Katayama S."/>
            <person name="Gough J."/>
            <person name="Frith M.C."/>
            <person name="Maeda N."/>
            <person name="Oyama R."/>
            <person name="Ravasi T."/>
            <person name="Lenhard B."/>
            <person name="Wells C."/>
            <person name="Kodzius R."/>
            <person name="Shimokawa K."/>
            <person name="Bajic V.B."/>
            <person name="Brenner S.E."/>
            <person name="Batalov S."/>
            <person name="Forrest A.R."/>
            <person name="Zavolan M."/>
            <person name="Davis M.J."/>
            <person name="Wilming L.G."/>
            <person name="Aidinis V."/>
            <person name="Allen J.E."/>
            <person name="Ambesi-Impiombato A."/>
            <person name="Apweiler R."/>
            <person name="Aturaliya R.N."/>
            <person name="Bailey T.L."/>
            <person name="Bansal M."/>
            <person name="Baxter L."/>
            <person name="Beisel K.W."/>
            <person name="Bersano T."/>
            <person name="Bono H."/>
            <person name="Chalk A.M."/>
            <person name="Chiu K.P."/>
            <person name="Choudhary V."/>
            <person name="Christoffels A."/>
            <person name="Clutterbuck D.R."/>
            <person name="Crowe M.L."/>
            <person name="Dalla E."/>
            <person name="Dalrymple B.P."/>
            <person name="de Bono B."/>
            <person name="Della Gatta G."/>
            <person name="di Bernardo D."/>
            <person name="Down T."/>
            <person name="Engstrom P."/>
            <person name="Fagiolini M."/>
            <person name="Faulkner G."/>
            <person name="Fletcher C.F."/>
            <person name="Fukushima T."/>
            <person name="Furuno M."/>
            <person name="Futaki S."/>
            <person name="Gariboldi M."/>
            <person name="Georgii-Hemming P."/>
            <person name="Gingeras T.R."/>
            <person name="Gojobori T."/>
            <person name="Green R.E."/>
            <person name="Gustincich S."/>
            <person name="Harbers M."/>
            <person name="Hayashi Y."/>
            <person name="Hensch T.K."/>
            <person name="Hirokawa N."/>
            <person name="Hill D."/>
            <person name="Huminiecki L."/>
            <person name="Iacono M."/>
            <person name="Ikeo K."/>
            <person name="Iwama A."/>
            <person name="Ishikawa T."/>
            <person name="Jakt M."/>
            <person name="Kanapin A."/>
            <person name="Katoh M."/>
            <person name="Kawasawa Y."/>
            <person name="Kelso J."/>
            <person name="Kitamura H."/>
            <person name="Kitano H."/>
            <person name="Kollias G."/>
            <person name="Krishnan S.P."/>
            <person name="Kruger A."/>
            <person name="Kummerfeld S.K."/>
            <person name="Kurochkin I.V."/>
            <person name="Lareau L.F."/>
            <person name="Lazarevic D."/>
            <person name="Lipovich L."/>
            <person name="Liu J."/>
            <person name="Liuni S."/>
            <person name="McWilliam S."/>
            <person name="Madan Babu M."/>
            <person name="Madera M."/>
            <person name="Marchionni L."/>
            <person name="Matsuda H."/>
            <person name="Matsuzawa S."/>
            <person name="Miki H."/>
            <person name="Mignone F."/>
            <person name="Miyake S."/>
            <person name="Morris K."/>
            <person name="Mottagui-Tabar S."/>
            <person name="Mulder N."/>
            <person name="Nakano N."/>
            <person name="Nakauchi H."/>
            <person name="Ng P."/>
            <person name="Nilsson R."/>
            <person name="Nishiguchi S."/>
            <person name="Nishikawa S."/>
            <person name="Nori F."/>
            <person name="Ohara O."/>
            <person name="Okazaki Y."/>
            <person name="Orlando V."/>
            <person name="Pang K.C."/>
            <person name="Pavan W.J."/>
            <person name="Pavesi G."/>
            <person name="Pesole G."/>
            <person name="Petrovsky N."/>
            <person name="Piazza S."/>
            <person name="Reed J."/>
            <person name="Reid J.F."/>
            <person name="Ring B.Z."/>
            <person name="Ringwald M."/>
            <person name="Rost B."/>
            <person name="Ruan Y."/>
            <person name="Salzberg S.L."/>
            <person name="Sandelin A."/>
            <person name="Schneider C."/>
            <person name="Schoenbach C."/>
            <person name="Sekiguchi K."/>
            <person name="Semple C.A."/>
            <person name="Seno S."/>
            <person name="Sessa L."/>
            <person name="Sheng Y."/>
            <person name="Shibata Y."/>
            <person name="Shimada H."/>
            <person name="Shimada K."/>
            <person name="Silva D."/>
            <person name="Sinclair B."/>
            <person name="Sperling S."/>
            <person name="Stupka E."/>
            <person name="Sugiura K."/>
            <person name="Sultana R."/>
            <person name="Takenaka Y."/>
            <person name="Taki K."/>
            <person name="Tammoja K."/>
            <person name="Tan S.L."/>
            <person name="Tang S."/>
            <person name="Taylor M.S."/>
            <person name="Tegner J."/>
            <person name="Teichmann S.A."/>
            <person name="Ueda H.R."/>
            <person name="van Nimwegen E."/>
            <person name="Verardo R."/>
            <person name="Wei C.L."/>
            <person name="Yagi K."/>
            <person name="Yamanishi H."/>
            <person name="Zabarovsky E."/>
            <person name="Zhu S."/>
            <person name="Zimmer A."/>
            <person name="Hide W."/>
            <person name="Bult C."/>
            <person name="Grimmond S.M."/>
            <person name="Teasdale R.D."/>
            <person name="Liu E.T."/>
            <person name="Brusic V."/>
            <person name="Quackenbush J."/>
            <person name="Wahlestedt C."/>
            <person name="Mattick J.S."/>
            <person name="Hume D.A."/>
            <person name="Kai C."/>
            <person name="Sasaki D."/>
            <person name="Tomaru Y."/>
            <person name="Fukuda S."/>
            <person name="Kanamori-Katayama M."/>
            <person name="Suzuki M."/>
            <person name="Aoki J."/>
            <person name="Arakawa T."/>
            <person name="Iida J."/>
            <person name="Imamura K."/>
            <person name="Itoh M."/>
            <person name="Kato T."/>
            <person name="Kawaji H."/>
            <person name="Kawagashira N."/>
            <person name="Kawashima T."/>
            <person name="Kojima M."/>
            <person name="Kondo S."/>
            <person name="Konno H."/>
            <person name="Nakano K."/>
            <person name="Ninomiya N."/>
            <person name="Nishio T."/>
            <person name="Okada M."/>
            <person name="Plessy C."/>
            <person name="Shibata K."/>
            <person name="Shiraki T."/>
            <person name="Suzuki S."/>
            <person name="Tagami M."/>
            <person name="Waki K."/>
            <person name="Watahiki A."/>
            <person name="Okamura-Oho Y."/>
            <person name="Suzuki H."/>
            <person name="Kawai J."/>
            <person name="Hayashizaki Y."/>
        </authorList>
    </citation>
    <scope>NUCLEOTIDE SEQUENCE [LARGE SCALE MRNA] (ISOFORMS 1 AND 4)</scope>
    <source>
        <strain>C57BL/6J</strain>
        <tissue>Spinal cord</tissue>
        <tissue>Tongue</tissue>
    </source>
</reference>
<reference key="2">
    <citation type="submission" date="2005-09" db="EMBL/GenBank/DDBJ databases">
        <authorList>
            <person name="Mural R.J."/>
            <person name="Adams M.D."/>
            <person name="Myers E.W."/>
            <person name="Smith H.O."/>
            <person name="Venter J.C."/>
        </authorList>
    </citation>
    <scope>NUCLEOTIDE SEQUENCE [LARGE SCALE GENOMIC DNA]</scope>
</reference>
<reference key="3">
    <citation type="journal article" date="2004" name="Genome Res.">
        <title>The status, quality, and expansion of the NIH full-length cDNA project: the Mammalian Gene Collection (MGC).</title>
        <authorList>
            <consortium name="The MGC Project Team"/>
        </authorList>
    </citation>
    <scope>NUCLEOTIDE SEQUENCE [LARGE SCALE MRNA] (ISOFORMS 1 AND 3)</scope>
    <source>
        <tissue>Brain</tissue>
        <tissue>Kidney</tissue>
    </source>
</reference>
<reference key="4">
    <citation type="journal article" date="2005" name="Biochemistry">
        <title>Role of structural and functional elements of mouse methionine-S-sulfoxide reductase in its subcellular distribution.</title>
        <authorList>
            <person name="Kim H.Y."/>
            <person name="Gladyshev V.N."/>
        </authorList>
    </citation>
    <scope>PARTIAL PROTEIN SEQUENCE</scope>
    <scope>IDENTIFICATION BY MASS SPECTROMETRY</scope>
    <scope>ALTERNATIVE SPLICING</scope>
    <scope>SUBCELLULAR LOCATION</scope>
</reference>
<reference key="5">
    <citation type="journal article" date="2010" name="Cell">
        <title>A tissue-specific atlas of mouse protein phosphorylation and expression.</title>
        <authorList>
            <person name="Huttlin E.L."/>
            <person name="Jedrychowski M.P."/>
            <person name="Elias J.E."/>
            <person name="Goswami T."/>
            <person name="Rad R."/>
            <person name="Beausoleil S.A."/>
            <person name="Villen J."/>
            <person name="Haas W."/>
            <person name="Sowa M.E."/>
            <person name="Gygi S.P."/>
        </authorList>
    </citation>
    <scope>IDENTIFICATION BY MASS SPECTROMETRY [LARGE SCALE ANALYSIS]</scope>
    <source>
        <tissue>Brain</tissue>
        <tissue>Brown adipose tissue</tissue>
        <tissue>Heart</tissue>
        <tissue>Kidney</tissue>
        <tissue>Liver</tissue>
        <tissue>Lung</tissue>
        <tissue>Pancreas</tissue>
        <tissue>Spleen</tissue>
        <tissue>Testis</tissue>
    </source>
</reference>
<reference key="6">
    <citation type="journal article" date="2010" name="J. Biol. Chem.">
        <title>Dual sites of protein initiation control the localization and myristoylation of methionine sulfoxide reductase A.</title>
        <authorList>
            <person name="Kim G."/>
            <person name="Cole N.B."/>
            <person name="Lim J.C."/>
            <person name="Zhao H."/>
            <person name="Levine R.L."/>
        </authorList>
    </citation>
    <scope>MYRISTOYLATION AT GLY-2 (ISOFORM 2)</scope>
    <scope>ALTERNATIVE INITIATION</scope>
</reference>
<reference key="7">
    <citation type="journal article" date="2013" name="Mol. Cell">
        <title>SIRT5-mediated lysine desuccinylation impacts diverse metabolic pathways.</title>
        <authorList>
            <person name="Park J."/>
            <person name="Chen Y."/>
            <person name="Tishkoff D.X."/>
            <person name="Peng C."/>
            <person name="Tan M."/>
            <person name="Dai L."/>
            <person name="Xie Z."/>
            <person name="Zhang Y."/>
            <person name="Zwaans B.M."/>
            <person name="Skinner M.E."/>
            <person name="Lombard D.B."/>
            <person name="Zhao Y."/>
        </authorList>
    </citation>
    <scope>SUCCINYLATION [LARGE SCALE ANALYSIS] AT LYS-104 AND LYS-183</scope>
    <scope>IDENTIFICATION BY MASS SPECTROMETRY [LARGE SCALE ANALYSIS]</scope>
    <source>
        <tissue>Liver</tissue>
    </source>
</reference>
<reference key="8">
    <citation type="journal article" date="2013" name="Proc. Natl. Acad. Sci. U.S.A.">
        <title>Label-free quantitative proteomics of the lysine acetylome in mitochondria identifies substrates of SIRT3 in metabolic pathways.</title>
        <authorList>
            <person name="Rardin M.J."/>
            <person name="Newman J.C."/>
            <person name="Held J.M."/>
            <person name="Cusack M.P."/>
            <person name="Sorensen D.J."/>
            <person name="Li B."/>
            <person name="Schilling B."/>
            <person name="Mooney S.D."/>
            <person name="Kahn C.R."/>
            <person name="Verdin E."/>
            <person name="Gibson B.W."/>
        </authorList>
    </citation>
    <scope>ACETYLATION [LARGE SCALE ANALYSIS] AT LYS-104 AND LYS-183</scope>
    <scope>IDENTIFICATION BY MASS SPECTROMETRY [LARGE SCALE ANALYSIS]</scope>
    <source>
        <tissue>Liver</tissue>
    </source>
</reference>
<reference key="9">
    <citation type="journal article" date="2019" name="Free Radic. Biol. Med.">
        <title>Drosophila methionine sulfoxide reductase A (MSRA) lacks methionine oxidase activity.</title>
        <authorList>
            <person name="Tarafdar S."/>
            <person name="Kim G."/>
            <person name="Levine R.L."/>
        </authorList>
    </citation>
    <scope>FUNCTION</scope>
    <scope>CATALYTIC ACTIVITY</scope>
</reference>
<dbReference type="EC" id="1.8.4.11" evidence="4"/>
<dbReference type="EMBL" id="AK002356">
    <property type="protein sequence ID" value="BAB22035.1"/>
    <property type="molecule type" value="mRNA"/>
</dbReference>
<dbReference type="EMBL" id="AK009822">
    <property type="protein sequence ID" value="BAB26522.1"/>
    <property type="molecule type" value="mRNA"/>
</dbReference>
<dbReference type="EMBL" id="AK049714">
    <property type="protein sequence ID" value="BAC33889.1"/>
    <property type="molecule type" value="mRNA"/>
</dbReference>
<dbReference type="EMBL" id="AK018338">
    <property type="status" value="NOT_ANNOTATED_CDS"/>
    <property type="molecule type" value="mRNA"/>
</dbReference>
<dbReference type="EMBL" id="CH466535">
    <property type="protein sequence ID" value="EDL36048.1"/>
    <property type="molecule type" value="Genomic_DNA"/>
</dbReference>
<dbReference type="EMBL" id="BC014738">
    <property type="protein sequence ID" value="AAH14738.1"/>
    <property type="molecule type" value="mRNA"/>
</dbReference>
<dbReference type="EMBL" id="BC089311">
    <property type="protein sequence ID" value="AAH89311.1"/>
    <property type="molecule type" value="mRNA"/>
</dbReference>
<dbReference type="CCDS" id="CCDS27209.1">
    <molecule id="Q9D6Y7-1"/>
</dbReference>
<dbReference type="CCDS" id="CCDS84147.1">
    <molecule id="Q9D6Y7-4"/>
</dbReference>
<dbReference type="RefSeq" id="NP_001240641.1">
    <molecule id="Q9D6Y7-1"/>
    <property type="nucleotide sequence ID" value="NM_001253712.1"/>
</dbReference>
<dbReference type="RefSeq" id="NP_001240643.1">
    <property type="nucleotide sequence ID" value="NM_001253714.1"/>
</dbReference>
<dbReference type="RefSeq" id="NP_001240644.1">
    <molecule id="Q9D6Y7-3"/>
    <property type="nucleotide sequence ID" value="NM_001253715.1"/>
</dbReference>
<dbReference type="RefSeq" id="NP_001240645.1">
    <molecule id="Q9D6Y7-4"/>
    <property type="nucleotide sequence ID" value="NM_001253716.1"/>
</dbReference>
<dbReference type="RefSeq" id="NP_080598.2">
    <molecule id="Q9D6Y7-1"/>
    <property type="nucleotide sequence ID" value="NM_026322.4"/>
</dbReference>
<dbReference type="RefSeq" id="XP_030103466.1">
    <molecule id="Q9D6Y7-1"/>
    <property type="nucleotide sequence ID" value="XM_030247606.1"/>
</dbReference>
<dbReference type="PDB" id="2L90">
    <property type="method" value="NMR"/>
    <property type="chains" value="A=22-233"/>
</dbReference>
<dbReference type="PDB" id="6AGV">
    <property type="method" value="X-ray"/>
    <property type="resolution" value="1.62 A"/>
    <property type="chains" value="A=1-233"/>
</dbReference>
<dbReference type="PDBsum" id="2L90"/>
<dbReference type="PDBsum" id="6AGV"/>
<dbReference type="BMRB" id="Q9D6Y7"/>
<dbReference type="SMR" id="Q9D6Y7"/>
<dbReference type="BioGRID" id="225444">
    <property type="interactions" value="2"/>
</dbReference>
<dbReference type="FunCoup" id="Q9D6Y7">
    <property type="interactions" value="1504"/>
</dbReference>
<dbReference type="IntAct" id="Q9D6Y7">
    <property type="interactions" value="1"/>
</dbReference>
<dbReference type="MINT" id="Q9D6Y7"/>
<dbReference type="STRING" id="10090.ENSMUSP00000065754"/>
<dbReference type="GlyGen" id="Q9D6Y7">
    <property type="glycosylation" value="2 sites, 1 O-linked glycan (1 site)"/>
</dbReference>
<dbReference type="iPTMnet" id="Q9D6Y7"/>
<dbReference type="PhosphoSitePlus" id="Q9D6Y7"/>
<dbReference type="SwissPalm" id="Q9D6Y7"/>
<dbReference type="jPOST" id="Q9D6Y7"/>
<dbReference type="PaxDb" id="10090-ENSMUSP00000065754"/>
<dbReference type="PeptideAtlas" id="Q9D6Y7"/>
<dbReference type="ProteomicsDB" id="291521">
    <molecule id="Q9D6Y7-1"/>
</dbReference>
<dbReference type="ProteomicsDB" id="291522">
    <molecule id="Q9D6Y7-2"/>
</dbReference>
<dbReference type="ProteomicsDB" id="291523">
    <molecule id="Q9D6Y7-3"/>
</dbReference>
<dbReference type="ProteomicsDB" id="291524">
    <molecule id="Q9D6Y7-4"/>
</dbReference>
<dbReference type="Pumba" id="Q9D6Y7"/>
<dbReference type="Antibodypedia" id="8418">
    <property type="antibodies" value="250 antibodies from 33 providers"/>
</dbReference>
<dbReference type="DNASU" id="110265"/>
<dbReference type="Ensembl" id="ENSMUST00000067927.9">
    <molecule id="Q9D6Y7-1"/>
    <property type="protein sequence ID" value="ENSMUSP00000065754.8"/>
    <property type="gene ID" value="ENSMUSG00000054733.10"/>
</dbReference>
<dbReference type="Ensembl" id="ENSMUST00000210428.2">
    <molecule id="Q9D6Y7-4"/>
    <property type="protein sequence ID" value="ENSMUSP00000147689.2"/>
    <property type="gene ID" value="ENSMUSG00000054733.10"/>
</dbReference>
<dbReference type="GeneID" id="110265"/>
<dbReference type="KEGG" id="mmu:110265"/>
<dbReference type="UCSC" id="uc007uig.2">
    <molecule id="Q9D6Y7-4"/>
    <property type="organism name" value="mouse"/>
</dbReference>
<dbReference type="UCSC" id="uc007uih.2">
    <molecule id="Q9D6Y7-3"/>
    <property type="organism name" value="mouse"/>
</dbReference>
<dbReference type="UCSC" id="uc007uii.2">
    <molecule id="Q9D6Y7-1"/>
    <property type="organism name" value="mouse"/>
</dbReference>
<dbReference type="AGR" id="MGI:106916"/>
<dbReference type="CTD" id="4482"/>
<dbReference type="MGI" id="MGI:106916">
    <property type="gene designation" value="Msra"/>
</dbReference>
<dbReference type="VEuPathDB" id="HostDB:ENSMUSG00000054733"/>
<dbReference type="eggNOG" id="KOG1635">
    <property type="taxonomic scope" value="Eukaryota"/>
</dbReference>
<dbReference type="GeneTree" id="ENSGT00390000003823"/>
<dbReference type="HOGENOM" id="CLU_031040_10_3_1"/>
<dbReference type="InParanoid" id="Q9D6Y7"/>
<dbReference type="OMA" id="LFWESHD"/>
<dbReference type="OrthoDB" id="77405at2759"/>
<dbReference type="PhylomeDB" id="Q9D6Y7"/>
<dbReference type="TreeFam" id="TF353884"/>
<dbReference type="BRENDA" id="1.8.4.11">
    <property type="organism ID" value="3474"/>
</dbReference>
<dbReference type="Reactome" id="R-MMU-5676934">
    <property type="pathway name" value="Protein repair"/>
</dbReference>
<dbReference type="BioGRID-ORCS" id="110265">
    <property type="hits" value="3 hits in 77 CRISPR screens"/>
</dbReference>
<dbReference type="ChiTaRS" id="Msra">
    <property type="organism name" value="mouse"/>
</dbReference>
<dbReference type="EvolutionaryTrace" id="Q9D6Y7"/>
<dbReference type="PRO" id="PR:Q9D6Y7"/>
<dbReference type="Proteomes" id="UP000000589">
    <property type="component" value="Chromosome 14"/>
</dbReference>
<dbReference type="RNAct" id="Q9D6Y7">
    <property type="molecule type" value="protein"/>
</dbReference>
<dbReference type="Bgee" id="ENSMUSG00000054733">
    <property type="expression patterns" value="Expressed in right kidney and 248 other cell types or tissues"/>
</dbReference>
<dbReference type="ExpressionAtlas" id="Q9D6Y7">
    <property type="expression patterns" value="baseline and differential"/>
</dbReference>
<dbReference type="GO" id="GO:0005737">
    <property type="term" value="C:cytoplasm"/>
    <property type="evidence" value="ECO:0000314"/>
    <property type="project" value="MGI"/>
</dbReference>
<dbReference type="GO" id="GO:0005829">
    <property type="term" value="C:cytosol"/>
    <property type="evidence" value="ECO:0007669"/>
    <property type="project" value="Ensembl"/>
</dbReference>
<dbReference type="GO" id="GO:0016020">
    <property type="term" value="C:membrane"/>
    <property type="evidence" value="ECO:0007669"/>
    <property type="project" value="UniProtKB-SubCell"/>
</dbReference>
<dbReference type="GO" id="GO:0005739">
    <property type="term" value="C:mitochondrion"/>
    <property type="evidence" value="ECO:0007005"/>
    <property type="project" value="MGI"/>
</dbReference>
<dbReference type="GO" id="GO:0016604">
    <property type="term" value="C:nuclear body"/>
    <property type="evidence" value="ECO:0007669"/>
    <property type="project" value="Ensembl"/>
</dbReference>
<dbReference type="GO" id="GO:0033744">
    <property type="term" value="F:L-methionine:thioredoxin-disulfide S-oxidoreductase activity"/>
    <property type="evidence" value="ECO:0007669"/>
    <property type="project" value="RHEA"/>
</dbReference>
<dbReference type="GO" id="GO:0008113">
    <property type="term" value="F:peptide-methionine (S)-S-oxide reductase activity"/>
    <property type="evidence" value="ECO:0000314"/>
    <property type="project" value="UniProtKB"/>
</dbReference>
<dbReference type="FunFam" id="3.30.1060.10:FF:000001">
    <property type="entry name" value="Peptide methionine sulfoxide reductase MsrA"/>
    <property type="match status" value="1"/>
</dbReference>
<dbReference type="Gene3D" id="3.30.1060.10">
    <property type="entry name" value="Peptide methionine sulphoxide reductase MsrA"/>
    <property type="match status" value="1"/>
</dbReference>
<dbReference type="HAMAP" id="MF_01401">
    <property type="entry name" value="MsrA"/>
    <property type="match status" value="1"/>
</dbReference>
<dbReference type="InterPro" id="IPR002569">
    <property type="entry name" value="Met_Sox_Rdtase_MsrA_dom"/>
</dbReference>
<dbReference type="InterPro" id="IPR036509">
    <property type="entry name" value="Met_Sox_Rdtase_MsrA_sf"/>
</dbReference>
<dbReference type="InterPro" id="IPR050162">
    <property type="entry name" value="MsrA_MetSO_reductase"/>
</dbReference>
<dbReference type="NCBIfam" id="TIGR00401">
    <property type="entry name" value="msrA"/>
    <property type="match status" value="1"/>
</dbReference>
<dbReference type="PANTHER" id="PTHR42799">
    <property type="entry name" value="MITOCHONDRIAL PEPTIDE METHIONINE SULFOXIDE REDUCTASE"/>
    <property type="match status" value="1"/>
</dbReference>
<dbReference type="PANTHER" id="PTHR42799:SF2">
    <property type="entry name" value="MITOCHONDRIAL PEPTIDE METHIONINE SULFOXIDE REDUCTASE"/>
    <property type="match status" value="1"/>
</dbReference>
<dbReference type="Pfam" id="PF01625">
    <property type="entry name" value="PMSR"/>
    <property type="match status" value="1"/>
</dbReference>
<dbReference type="SUPFAM" id="SSF55068">
    <property type="entry name" value="Peptide methionine sulfoxide reductase"/>
    <property type="match status" value="1"/>
</dbReference>
<protein>
    <recommendedName>
        <fullName>Mitochondrial peptide methionine sulfoxide reductase</fullName>
        <ecNumber evidence="4">1.8.4.11</ecNumber>
    </recommendedName>
    <alternativeName>
        <fullName>Peptide-methionine (S)-S-oxide reductase</fullName>
        <shortName>Peptide Met(O) reductase</shortName>
    </alternativeName>
    <alternativeName>
        <fullName>Protein-methionine-S-oxide reductase</fullName>
        <shortName>PMSR</shortName>
    </alternativeName>
</protein>
<keyword id="KW-0002">3D-structure</keyword>
<keyword id="KW-0007">Acetylation</keyword>
<keyword id="KW-0024">Alternative initiation</keyword>
<keyword id="KW-0025">Alternative splicing</keyword>
<keyword id="KW-0963">Cytoplasm</keyword>
<keyword id="KW-0903">Direct protein sequencing</keyword>
<keyword id="KW-1015">Disulfide bond</keyword>
<keyword id="KW-0449">Lipoprotein</keyword>
<keyword id="KW-0472">Membrane</keyword>
<keyword id="KW-0496">Mitochondrion</keyword>
<keyword id="KW-0519">Myristate</keyword>
<keyword id="KW-0539">Nucleus</keyword>
<keyword id="KW-0560">Oxidoreductase</keyword>
<keyword id="KW-0676">Redox-active center</keyword>
<keyword id="KW-1185">Reference proteome</keyword>
<keyword id="KW-0809">Transit peptide</keyword>
<evidence type="ECO:0000250" key="1"/>
<evidence type="ECO:0000250" key="2">
    <source>
        <dbReference type="UniProtKB" id="P0A744"/>
    </source>
</evidence>
<evidence type="ECO:0000269" key="3">
    <source>
    </source>
</evidence>
<evidence type="ECO:0000269" key="4">
    <source>
    </source>
</evidence>
<evidence type="ECO:0000303" key="5">
    <source>
    </source>
</evidence>
<evidence type="ECO:0000303" key="6">
    <source>
    </source>
</evidence>
<evidence type="ECO:0000305" key="7"/>
<evidence type="ECO:0007744" key="8">
    <source>
    </source>
</evidence>
<evidence type="ECO:0007744" key="9">
    <source>
    </source>
</evidence>
<evidence type="ECO:0007829" key="10">
    <source>
        <dbReference type="PDB" id="2L90"/>
    </source>
</evidence>
<evidence type="ECO:0007829" key="11">
    <source>
        <dbReference type="PDB" id="6AGV"/>
    </source>
</evidence>
<accession>Q9D6Y7</accession>
<accession>Q5EBQ7</accession>
<accession>Q91WK9</accession>
<accession>Q9DCY2</accession>
<name>MSRA_MOUSE</name>
<organism>
    <name type="scientific">Mus musculus</name>
    <name type="common">Mouse</name>
    <dbReference type="NCBI Taxonomy" id="10090"/>
    <lineage>
        <taxon>Eukaryota</taxon>
        <taxon>Metazoa</taxon>
        <taxon>Chordata</taxon>
        <taxon>Craniata</taxon>
        <taxon>Vertebrata</taxon>
        <taxon>Euteleostomi</taxon>
        <taxon>Mammalia</taxon>
        <taxon>Eutheria</taxon>
        <taxon>Euarchontoglires</taxon>
        <taxon>Glires</taxon>
        <taxon>Rodentia</taxon>
        <taxon>Myomorpha</taxon>
        <taxon>Muroidea</taxon>
        <taxon>Muridae</taxon>
        <taxon>Murinae</taxon>
        <taxon>Mus</taxon>
        <taxon>Mus</taxon>
    </lineage>
</organism>